<dbReference type="EC" id="4.2.1.20" evidence="1"/>
<dbReference type="EMBL" id="CP000803">
    <property type="protein sequence ID" value="ABU60585.1"/>
    <property type="molecule type" value="Genomic_DNA"/>
</dbReference>
<dbReference type="RefSeq" id="WP_003014081.1">
    <property type="nucleotide sequence ID" value="NC_009749.1"/>
</dbReference>
<dbReference type="SMR" id="A7N9D2"/>
<dbReference type="KEGG" id="fta:FTA_0107"/>
<dbReference type="HOGENOM" id="CLU_016734_3_1_6"/>
<dbReference type="UniPathway" id="UPA00035">
    <property type="reaction ID" value="UER00044"/>
</dbReference>
<dbReference type="GO" id="GO:0005737">
    <property type="term" value="C:cytoplasm"/>
    <property type="evidence" value="ECO:0007669"/>
    <property type="project" value="TreeGrafter"/>
</dbReference>
<dbReference type="GO" id="GO:0004834">
    <property type="term" value="F:tryptophan synthase activity"/>
    <property type="evidence" value="ECO:0007669"/>
    <property type="project" value="UniProtKB-UniRule"/>
</dbReference>
<dbReference type="CDD" id="cd06446">
    <property type="entry name" value="Trp-synth_B"/>
    <property type="match status" value="1"/>
</dbReference>
<dbReference type="FunFam" id="3.40.50.1100:FF:000001">
    <property type="entry name" value="Tryptophan synthase beta chain"/>
    <property type="match status" value="1"/>
</dbReference>
<dbReference type="FunFam" id="3.40.50.1100:FF:000004">
    <property type="entry name" value="Tryptophan synthase beta chain"/>
    <property type="match status" value="1"/>
</dbReference>
<dbReference type="Gene3D" id="3.40.50.1100">
    <property type="match status" value="2"/>
</dbReference>
<dbReference type="HAMAP" id="MF_00133">
    <property type="entry name" value="Trp_synth_beta"/>
    <property type="match status" value="1"/>
</dbReference>
<dbReference type="InterPro" id="IPR006653">
    <property type="entry name" value="Trp_synth_b_CS"/>
</dbReference>
<dbReference type="InterPro" id="IPR006654">
    <property type="entry name" value="Trp_synth_beta"/>
</dbReference>
<dbReference type="InterPro" id="IPR023026">
    <property type="entry name" value="Trp_synth_beta/beta-like"/>
</dbReference>
<dbReference type="InterPro" id="IPR001926">
    <property type="entry name" value="TrpB-like_PALP"/>
</dbReference>
<dbReference type="InterPro" id="IPR036052">
    <property type="entry name" value="TrpB-like_PALP_sf"/>
</dbReference>
<dbReference type="NCBIfam" id="TIGR00263">
    <property type="entry name" value="trpB"/>
    <property type="match status" value="1"/>
</dbReference>
<dbReference type="PANTHER" id="PTHR48077:SF3">
    <property type="entry name" value="TRYPTOPHAN SYNTHASE"/>
    <property type="match status" value="1"/>
</dbReference>
<dbReference type="PANTHER" id="PTHR48077">
    <property type="entry name" value="TRYPTOPHAN SYNTHASE-RELATED"/>
    <property type="match status" value="1"/>
</dbReference>
<dbReference type="Pfam" id="PF00291">
    <property type="entry name" value="PALP"/>
    <property type="match status" value="1"/>
</dbReference>
<dbReference type="PIRSF" id="PIRSF001413">
    <property type="entry name" value="Trp_syn_beta"/>
    <property type="match status" value="1"/>
</dbReference>
<dbReference type="SUPFAM" id="SSF53686">
    <property type="entry name" value="Tryptophan synthase beta subunit-like PLP-dependent enzymes"/>
    <property type="match status" value="1"/>
</dbReference>
<dbReference type="PROSITE" id="PS00168">
    <property type="entry name" value="TRP_SYNTHASE_BETA"/>
    <property type="match status" value="1"/>
</dbReference>
<comment type="function">
    <text evidence="1">The beta subunit is responsible for the synthesis of L-tryptophan from indole and L-serine.</text>
</comment>
<comment type="catalytic activity">
    <reaction evidence="1">
        <text>(1S,2R)-1-C-(indol-3-yl)glycerol 3-phosphate + L-serine = D-glyceraldehyde 3-phosphate + L-tryptophan + H2O</text>
        <dbReference type="Rhea" id="RHEA:10532"/>
        <dbReference type="ChEBI" id="CHEBI:15377"/>
        <dbReference type="ChEBI" id="CHEBI:33384"/>
        <dbReference type="ChEBI" id="CHEBI:57912"/>
        <dbReference type="ChEBI" id="CHEBI:58866"/>
        <dbReference type="ChEBI" id="CHEBI:59776"/>
        <dbReference type="EC" id="4.2.1.20"/>
    </reaction>
</comment>
<comment type="cofactor">
    <cofactor evidence="1">
        <name>pyridoxal 5'-phosphate</name>
        <dbReference type="ChEBI" id="CHEBI:597326"/>
    </cofactor>
</comment>
<comment type="pathway">
    <text evidence="1">Amino-acid biosynthesis; L-tryptophan biosynthesis; L-tryptophan from chorismate: step 5/5.</text>
</comment>
<comment type="subunit">
    <text evidence="1">Tetramer of two alpha and two beta chains.</text>
</comment>
<comment type="similarity">
    <text evidence="1">Belongs to the TrpB family.</text>
</comment>
<keyword id="KW-0028">Amino-acid biosynthesis</keyword>
<keyword id="KW-0057">Aromatic amino acid biosynthesis</keyword>
<keyword id="KW-0456">Lyase</keyword>
<keyword id="KW-0663">Pyridoxal phosphate</keyword>
<keyword id="KW-0822">Tryptophan biosynthesis</keyword>
<feature type="chain" id="PRO_1000018341" description="Tryptophan synthase beta chain">
    <location>
        <begin position="1"/>
        <end position="396"/>
    </location>
</feature>
<feature type="modified residue" description="N6-(pyridoxal phosphate)lysine" evidence="1">
    <location>
        <position position="86"/>
    </location>
</feature>
<sequence length="396" mass="43107">MSKLNAYFGEYGGQFVPQILVPALDQLEQEFIKAQADESFKQEFKELLQEYAGRPTALTKTRNIVKNTRTKLYLKREDLLHGGAHKTNQVLGQALLVKRMGKKEIIAETGAGQHGVATALACALLDLKCRVYMGAKDVERQSPNVFRMKLMGAEVIPVHSGSATLKDACNEALRDWSANYSKAHYLLGTAAGPHPFPTIVREFQRMIGEETKQQMLAKEGRLPDAVIACVGGGSNAIGMFADFIDEKNVKLIGVEPAGKGIETGEHGAPLKHGKTGIFFGMKAPLMQNSDGQIEESYSISAGLDFPSVGPQHAHLLAIGRAKYASATDDEALDAFKLLCKKEGIIPALESSHALAHALKLAYEDPNKEQLLVVNLSGRGDKDIFTVHDILKEKGEI</sequence>
<gene>
    <name evidence="1" type="primary">trpB</name>
    <name type="ordered locus">FTA_0107</name>
</gene>
<reference key="1">
    <citation type="journal article" date="2009" name="PLoS ONE">
        <title>Complete genome sequence of Francisella tularensis subspecies holarctica FTNF002-00.</title>
        <authorList>
            <person name="Barabote R.D."/>
            <person name="Xie G."/>
            <person name="Brettin T.S."/>
            <person name="Hinrichs S.H."/>
            <person name="Fey P.D."/>
            <person name="Jay J.J."/>
            <person name="Engle J.L."/>
            <person name="Godbole S.D."/>
            <person name="Noronha J.M."/>
            <person name="Scheuermann R.H."/>
            <person name="Zhou L.W."/>
            <person name="Lion C."/>
            <person name="Dempsey M.P."/>
        </authorList>
    </citation>
    <scope>NUCLEOTIDE SEQUENCE [LARGE SCALE GENOMIC DNA]</scope>
    <source>
        <strain>FTNF002-00 / FTA</strain>
    </source>
</reference>
<protein>
    <recommendedName>
        <fullName evidence="1">Tryptophan synthase beta chain</fullName>
        <ecNumber evidence="1">4.2.1.20</ecNumber>
    </recommendedName>
</protein>
<name>TRPB_FRATF</name>
<accession>A7N9D2</accession>
<proteinExistence type="inferred from homology"/>
<organism>
    <name type="scientific">Francisella tularensis subsp. holarctica (strain FTNF002-00 / FTA)</name>
    <dbReference type="NCBI Taxonomy" id="458234"/>
    <lineage>
        <taxon>Bacteria</taxon>
        <taxon>Pseudomonadati</taxon>
        <taxon>Pseudomonadota</taxon>
        <taxon>Gammaproteobacteria</taxon>
        <taxon>Thiotrichales</taxon>
        <taxon>Francisellaceae</taxon>
        <taxon>Francisella</taxon>
    </lineage>
</organism>
<evidence type="ECO:0000255" key="1">
    <source>
        <dbReference type="HAMAP-Rule" id="MF_00133"/>
    </source>
</evidence>